<feature type="chain" id="PRO_0000437014" description="Transcription factor TGA2.3">
    <location>
        <begin position="1"/>
        <end position="329"/>
    </location>
</feature>
<feature type="domain" description="bZIP" evidence="2">
    <location>
        <begin position="43"/>
        <end position="87"/>
    </location>
</feature>
<feature type="domain" description="DOG1" evidence="3">
    <location>
        <begin position="110"/>
        <end position="326"/>
    </location>
</feature>
<feature type="region of interest" description="Disordered" evidence="4">
    <location>
        <begin position="1"/>
        <end position="48"/>
    </location>
</feature>
<feature type="region of interest" description="Basic motif" evidence="2">
    <location>
        <begin position="45"/>
        <end position="65"/>
    </location>
</feature>
<feature type="region of interest" description="Leucine-zipper" evidence="2">
    <location>
        <begin position="71"/>
        <end position="85"/>
    </location>
</feature>
<feature type="compositionally biased region" description="Basic and acidic residues" evidence="4">
    <location>
        <begin position="33"/>
        <end position="46"/>
    </location>
</feature>
<name>TGA23_ORYSJ</name>
<sequence>MADMSPRTDTSTDDTDDNHMLEPGQLALAAASDSDRSKDKHEDQKTLRRLAQNREAARKSRLRKKAYVQQLENSRLKLTQLEQELQRARQQGIFISSSVDQTHSMSGNGALAFDMEYARWLEEHNRQINELRSAVNAHAGDNELRGVVDKIMSHYEEIFKQKGNAAKADVFHVLSGMWKTPAERCFLWLGGFRPSELLKLLSTQLEPLTEQQLSGIANLQQSSQQAEDALSQGMEALQQSLAETLAGSLGSSGSTGNVANYMGQMAMAMGKLGTLENFLRQADNLRQQTLQQMQRILTTRQSARALLVISDYSSRLRALSSLWLARPKE</sequence>
<organism>
    <name type="scientific">Oryza sativa subsp. japonica</name>
    <name type="common">Rice</name>
    <dbReference type="NCBI Taxonomy" id="39947"/>
    <lineage>
        <taxon>Eukaryota</taxon>
        <taxon>Viridiplantae</taxon>
        <taxon>Streptophyta</taxon>
        <taxon>Embryophyta</taxon>
        <taxon>Tracheophyta</taxon>
        <taxon>Spermatophyta</taxon>
        <taxon>Magnoliopsida</taxon>
        <taxon>Liliopsida</taxon>
        <taxon>Poales</taxon>
        <taxon>Poaceae</taxon>
        <taxon>BOP clade</taxon>
        <taxon>Oryzoideae</taxon>
        <taxon>Oryzeae</taxon>
        <taxon>Oryzinae</taxon>
        <taxon>Oryza</taxon>
        <taxon>Oryza sativa</taxon>
    </lineage>
</organism>
<gene>
    <name evidence="7" type="primary">TGA2.3</name>
    <name evidence="10" type="ordered locus">Os01g0279900</name>
    <name evidence="8" type="ordered locus">LOC_Os01g17260</name>
</gene>
<evidence type="ECO:0000250" key="1">
    <source>
        <dbReference type="UniProtKB" id="Q7X993"/>
    </source>
</evidence>
<evidence type="ECO:0000255" key="2">
    <source>
        <dbReference type="PROSITE-ProRule" id="PRU00978"/>
    </source>
</evidence>
<evidence type="ECO:0000255" key="3">
    <source>
        <dbReference type="PROSITE-ProRule" id="PRU01147"/>
    </source>
</evidence>
<evidence type="ECO:0000256" key="4">
    <source>
        <dbReference type="SAM" id="MobiDB-lite"/>
    </source>
</evidence>
<evidence type="ECO:0000269" key="5">
    <source>
    </source>
</evidence>
<evidence type="ECO:0000303" key="6">
    <source>
    </source>
</evidence>
<evidence type="ECO:0000303" key="7">
    <source>
    </source>
</evidence>
<evidence type="ECO:0000305" key="8"/>
<evidence type="ECO:0000312" key="9">
    <source>
        <dbReference type="EMBL" id="BAB72063.1"/>
    </source>
</evidence>
<evidence type="ECO:0000312" key="10">
    <source>
        <dbReference type="EMBL" id="BAF04665.1"/>
    </source>
</evidence>
<keyword id="KW-0238">DNA-binding</keyword>
<keyword id="KW-0539">Nucleus</keyword>
<keyword id="KW-0611">Plant defense</keyword>
<keyword id="KW-1185">Reference proteome</keyword>
<keyword id="KW-0804">Transcription</keyword>
<keyword id="KW-0805">Transcription regulation</keyword>
<protein>
    <recommendedName>
        <fullName evidence="8">Transcription factor TGA2.3</fullName>
    </recommendedName>
    <alternativeName>
        <fullName evidence="9">OsNIF3</fullName>
    </alternativeName>
    <alternativeName>
        <fullName evidence="6">bZIP transcription factor 3</fullName>
        <shortName evidence="6">OsbZIP03</shortName>
    </alternativeName>
</protein>
<comment type="function">
    <text evidence="1">Transcriptional regulator involved in defense response.</text>
</comment>
<comment type="subunit">
    <text evidence="5">Interacts with NPR1/NH1 and NPR3/NH3.</text>
</comment>
<comment type="subcellular location">
    <subcellularLocation>
        <location evidence="2">Nucleus</location>
    </subcellularLocation>
</comment>
<comment type="similarity">
    <text evidence="8">Belongs to the bZIP family.</text>
</comment>
<dbReference type="EMBL" id="AB051296">
    <property type="protein sequence ID" value="BAB72063.1"/>
    <property type="molecule type" value="mRNA"/>
</dbReference>
<dbReference type="EMBL" id="HM991168">
    <property type="protein sequence ID" value="AEF30411.1"/>
    <property type="molecule type" value="mRNA"/>
</dbReference>
<dbReference type="EMBL" id="AP000815">
    <property type="status" value="NOT_ANNOTATED_CDS"/>
    <property type="molecule type" value="Genomic_DNA"/>
</dbReference>
<dbReference type="EMBL" id="AP008207">
    <property type="protein sequence ID" value="BAF04665.1"/>
    <property type="molecule type" value="Genomic_DNA"/>
</dbReference>
<dbReference type="EMBL" id="AP014957">
    <property type="protein sequence ID" value="BAS71588.1"/>
    <property type="molecule type" value="Genomic_DNA"/>
</dbReference>
<dbReference type="EMBL" id="AK242743">
    <property type="protein sequence ID" value="BAH01331.1"/>
    <property type="molecule type" value="mRNA"/>
</dbReference>
<dbReference type="RefSeq" id="XP_015621704.1">
    <property type="nucleotide sequence ID" value="XM_015766218.1"/>
</dbReference>
<dbReference type="SMR" id="Q0JNL3"/>
<dbReference type="STRING" id="39947.Q0JNL3"/>
<dbReference type="PaxDb" id="39947-Q0JNL3"/>
<dbReference type="EnsemblPlants" id="Os01t0279900-01">
    <property type="protein sequence ID" value="Os01t0279900-01"/>
    <property type="gene ID" value="Os01g0279900"/>
</dbReference>
<dbReference type="GeneID" id="4326907"/>
<dbReference type="Gramene" id="Os01t0279900-01">
    <property type="protein sequence ID" value="Os01t0279900-01"/>
    <property type="gene ID" value="Os01g0279900"/>
</dbReference>
<dbReference type="KEGG" id="dosa:Os01g0279900"/>
<dbReference type="KEGG" id="osa:4326907"/>
<dbReference type="eggNOG" id="ENOG502QU32">
    <property type="taxonomic scope" value="Eukaryota"/>
</dbReference>
<dbReference type="HOGENOM" id="CLU_024782_1_1_1"/>
<dbReference type="InParanoid" id="Q0JNL3"/>
<dbReference type="OMA" id="RSNHENW"/>
<dbReference type="OrthoDB" id="2015618at2759"/>
<dbReference type="Proteomes" id="UP000000763">
    <property type="component" value="Chromosome 1"/>
</dbReference>
<dbReference type="Proteomes" id="UP000059680">
    <property type="component" value="Chromosome 1"/>
</dbReference>
<dbReference type="GO" id="GO:0005634">
    <property type="term" value="C:nucleus"/>
    <property type="evidence" value="ECO:0007669"/>
    <property type="project" value="UniProtKB-SubCell"/>
</dbReference>
<dbReference type="GO" id="GO:0003700">
    <property type="term" value="F:DNA-binding transcription factor activity"/>
    <property type="evidence" value="ECO:0007669"/>
    <property type="project" value="InterPro"/>
</dbReference>
<dbReference type="GO" id="GO:0043565">
    <property type="term" value="F:sequence-specific DNA binding"/>
    <property type="evidence" value="ECO:0007669"/>
    <property type="project" value="InterPro"/>
</dbReference>
<dbReference type="GO" id="GO:0006952">
    <property type="term" value="P:defense response"/>
    <property type="evidence" value="ECO:0007669"/>
    <property type="project" value="UniProtKB-KW"/>
</dbReference>
<dbReference type="GO" id="GO:0006351">
    <property type="term" value="P:DNA-templated transcription"/>
    <property type="evidence" value="ECO:0007669"/>
    <property type="project" value="InterPro"/>
</dbReference>
<dbReference type="FunFam" id="1.20.5.170:FF:000019">
    <property type="entry name" value="BZIP family transcription factor"/>
    <property type="match status" value="1"/>
</dbReference>
<dbReference type="Gene3D" id="1.20.5.170">
    <property type="match status" value="1"/>
</dbReference>
<dbReference type="InterPro" id="IPR004827">
    <property type="entry name" value="bZIP"/>
</dbReference>
<dbReference type="InterPro" id="IPR046347">
    <property type="entry name" value="bZIP_sf"/>
</dbReference>
<dbReference type="InterPro" id="IPR025422">
    <property type="entry name" value="TGA_domain"/>
</dbReference>
<dbReference type="PANTHER" id="PTHR45693:SF46">
    <property type="entry name" value="TRANSCRIPTION FACTOR TGA2-RELATED"/>
    <property type="match status" value="1"/>
</dbReference>
<dbReference type="PANTHER" id="PTHR45693">
    <property type="entry name" value="TRANSCRIPTION FACTOR TGA9"/>
    <property type="match status" value="1"/>
</dbReference>
<dbReference type="Pfam" id="PF00170">
    <property type="entry name" value="bZIP_1"/>
    <property type="match status" value="1"/>
</dbReference>
<dbReference type="Pfam" id="PF14144">
    <property type="entry name" value="DOG1"/>
    <property type="match status" value="1"/>
</dbReference>
<dbReference type="SMART" id="SM00338">
    <property type="entry name" value="BRLZ"/>
    <property type="match status" value="1"/>
</dbReference>
<dbReference type="SUPFAM" id="SSF57959">
    <property type="entry name" value="Leucine zipper domain"/>
    <property type="match status" value="1"/>
</dbReference>
<dbReference type="PROSITE" id="PS50217">
    <property type="entry name" value="BZIP"/>
    <property type="match status" value="1"/>
</dbReference>
<dbReference type="PROSITE" id="PS00036">
    <property type="entry name" value="BZIP_BASIC"/>
    <property type="match status" value="1"/>
</dbReference>
<dbReference type="PROSITE" id="PS51806">
    <property type="entry name" value="DOG1"/>
    <property type="match status" value="1"/>
</dbReference>
<reference key="1">
    <citation type="submission" date="2001-11" db="EMBL/GenBank/DDBJ databases">
        <title>cDNA cloning of bZIP transcription factors from rice.</title>
        <authorList>
            <person name="Yokoyama T."/>
            <person name="Motoyama T."/>
            <person name="Yoneyama K."/>
            <person name="Yamaguchi I."/>
        </authorList>
    </citation>
    <scope>NUCLEOTIDE SEQUENCE [MRNA]</scope>
</reference>
<reference key="2">
    <citation type="submission" date="2010-07" db="EMBL/GenBank/DDBJ databases">
        <title>Oryza sativa japonica group cultivar Dongjin putative TGA2-like protein 3 mRNA.</title>
        <authorList>
            <person name="Moon S.-J."/>
            <person name="Shin D."/>
            <person name="Kim B.-G."/>
            <person name="Park S.R."/>
            <person name="Byun M.-O."/>
        </authorList>
    </citation>
    <scope>NUCLEOTIDE SEQUENCE [MRNA]</scope>
    <source>
        <strain>cv. Dongjin</strain>
    </source>
</reference>
<reference key="3">
    <citation type="journal article" date="2002" name="Nature">
        <title>The genome sequence and structure of rice chromosome 1.</title>
        <authorList>
            <person name="Sasaki T."/>
            <person name="Matsumoto T."/>
            <person name="Yamamoto K."/>
            <person name="Sakata K."/>
            <person name="Baba T."/>
            <person name="Katayose Y."/>
            <person name="Wu J."/>
            <person name="Niimura Y."/>
            <person name="Cheng Z."/>
            <person name="Nagamura Y."/>
            <person name="Antonio B.A."/>
            <person name="Kanamori H."/>
            <person name="Hosokawa S."/>
            <person name="Masukawa M."/>
            <person name="Arikawa K."/>
            <person name="Chiden Y."/>
            <person name="Hayashi M."/>
            <person name="Okamoto M."/>
            <person name="Ando T."/>
            <person name="Aoki H."/>
            <person name="Arita K."/>
            <person name="Hamada M."/>
            <person name="Harada C."/>
            <person name="Hijishita S."/>
            <person name="Honda M."/>
            <person name="Ichikawa Y."/>
            <person name="Idonuma A."/>
            <person name="Iijima M."/>
            <person name="Ikeda M."/>
            <person name="Ikeno M."/>
            <person name="Ito S."/>
            <person name="Ito T."/>
            <person name="Ito Y."/>
            <person name="Ito Y."/>
            <person name="Iwabuchi A."/>
            <person name="Kamiya K."/>
            <person name="Karasawa W."/>
            <person name="Katagiri S."/>
            <person name="Kikuta A."/>
            <person name="Kobayashi N."/>
            <person name="Kono I."/>
            <person name="Machita K."/>
            <person name="Maehara T."/>
            <person name="Mizuno H."/>
            <person name="Mizubayashi T."/>
            <person name="Mukai Y."/>
            <person name="Nagasaki H."/>
            <person name="Nakashima M."/>
            <person name="Nakama Y."/>
            <person name="Nakamichi Y."/>
            <person name="Nakamura M."/>
            <person name="Namiki N."/>
            <person name="Negishi M."/>
            <person name="Ohta I."/>
            <person name="Ono N."/>
            <person name="Saji S."/>
            <person name="Sakai K."/>
            <person name="Shibata M."/>
            <person name="Shimokawa T."/>
            <person name="Shomura A."/>
            <person name="Song J."/>
            <person name="Takazaki Y."/>
            <person name="Terasawa K."/>
            <person name="Tsuji K."/>
            <person name="Waki K."/>
            <person name="Yamagata H."/>
            <person name="Yamane H."/>
            <person name="Yoshiki S."/>
            <person name="Yoshihara R."/>
            <person name="Yukawa K."/>
            <person name="Zhong H."/>
            <person name="Iwama H."/>
            <person name="Endo T."/>
            <person name="Ito H."/>
            <person name="Hahn J.H."/>
            <person name="Kim H.-I."/>
            <person name="Eun M.-Y."/>
            <person name="Yano M."/>
            <person name="Jiang J."/>
            <person name="Gojobori T."/>
        </authorList>
    </citation>
    <scope>NUCLEOTIDE SEQUENCE [LARGE SCALE GENOMIC DNA]</scope>
    <source>
        <strain>cv. Nipponbare</strain>
    </source>
</reference>
<reference key="4">
    <citation type="journal article" date="2005" name="Nature">
        <title>The map-based sequence of the rice genome.</title>
        <authorList>
            <consortium name="International rice genome sequencing project (IRGSP)"/>
        </authorList>
    </citation>
    <scope>NUCLEOTIDE SEQUENCE [LARGE SCALE GENOMIC DNA]</scope>
    <source>
        <strain>cv. Nipponbare</strain>
    </source>
</reference>
<reference key="5">
    <citation type="journal article" date="2008" name="Nucleic Acids Res.">
        <title>The rice annotation project database (RAP-DB): 2008 update.</title>
        <authorList>
            <consortium name="The rice annotation project (RAP)"/>
        </authorList>
    </citation>
    <scope>GENOME REANNOTATION</scope>
    <source>
        <strain>cv. Nipponbare</strain>
    </source>
</reference>
<reference key="6">
    <citation type="journal article" date="2013" name="Rice">
        <title>Improvement of the Oryza sativa Nipponbare reference genome using next generation sequence and optical map data.</title>
        <authorList>
            <person name="Kawahara Y."/>
            <person name="de la Bastide M."/>
            <person name="Hamilton J.P."/>
            <person name="Kanamori H."/>
            <person name="McCombie W.R."/>
            <person name="Ouyang S."/>
            <person name="Schwartz D.C."/>
            <person name="Tanaka T."/>
            <person name="Wu J."/>
            <person name="Zhou S."/>
            <person name="Childs K.L."/>
            <person name="Davidson R.M."/>
            <person name="Lin H."/>
            <person name="Quesada-Ocampo L."/>
            <person name="Vaillancourt B."/>
            <person name="Sakai H."/>
            <person name="Lee S.S."/>
            <person name="Kim J."/>
            <person name="Numa H."/>
            <person name="Itoh T."/>
            <person name="Buell C.R."/>
            <person name="Matsumoto T."/>
        </authorList>
    </citation>
    <scope>GENOME REANNOTATION</scope>
    <source>
        <strain>cv. Nipponbare</strain>
    </source>
</reference>
<reference key="7">
    <citation type="submission" date="2006-10" db="EMBL/GenBank/DDBJ databases">
        <title>Oryza sativa full length cDNA.</title>
        <authorList>
            <consortium name="The rice full-length cDNA consortium"/>
        </authorList>
    </citation>
    <scope>NUCLEOTIDE SEQUENCE [LARGE SCALE MRNA]</scope>
    <source>
        <strain>cv. Nipponbare</strain>
    </source>
</reference>
<reference key="8">
    <citation type="journal article" date="2008" name="Plant Physiol.">
        <title>Genomic survey and gene expression analysis of the basic leucine zipper transcription factor family in rice.</title>
        <authorList>
            <person name="Nijhawan A."/>
            <person name="Jain M."/>
            <person name="Tyagi A.K."/>
            <person name="Khurana J.P."/>
        </authorList>
    </citation>
    <scope>GENE FAMILY</scope>
    <scope>NOMENCLATURE</scope>
</reference>
<reference key="9">
    <citation type="journal article" date="2014" name="BMC Genomics">
        <title>Interaction specificity and coexpression of rice NPR1 homologs 1 and 3 (NH1 and NH3), TGA transcription factors and negative regulator of resistance (NRR) proteins.</title>
        <authorList>
            <person name="Chern M."/>
            <person name="Bai W."/>
            <person name="Ruan D."/>
            <person name="Oh T."/>
            <person name="Chen X."/>
            <person name="Ronald P.C."/>
        </authorList>
    </citation>
    <scope>INTERACTION WITH NPR1/NH1 AND NPR3/NH3</scope>
</reference>
<accession>Q0JNL3</accession>
<accession>Q8W5R8</accession>
<proteinExistence type="evidence at protein level"/>